<protein>
    <recommendedName>
        <fullName>Uncharacterized protein TP_0869</fullName>
    </recommendedName>
</protein>
<feature type="chain" id="PRO_0000202342" description="Uncharacterized protein TP_0869">
    <location>
        <begin position="1"/>
        <end position="78"/>
    </location>
</feature>
<organism>
    <name type="scientific">Treponema pallidum (strain Nichols)</name>
    <dbReference type="NCBI Taxonomy" id="243276"/>
    <lineage>
        <taxon>Bacteria</taxon>
        <taxon>Pseudomonadati</taxon>
        <taxon>Spirochaetota</taxon>
        <taxon>Spirochaetia</taxon>
        <taxon>Spirochaetales</taxon>
        <taxon>Treponemataceae</taxon>
        <taxon>Treponema</taxon>
    </lineage>
</organism>
<name>Y869_TREPA</name>
<gene>
    <name type="ordered locus">TP_0869</name>
</gene>
<accession>O83839</accession>
<keyword id="KW-1185">Reference proteome</keyword>
<reference key="1">
    <citation type="journal article" date="1998" name="Science">
        <title>Complete genome sequence of Treponema pallidum, the syphilis spirochete.</title>
        <authorList>
            <person name="Fraser C.M."/>
            <person name="Norris S.J."/>
            <person name="Weinstock G.M."/>
            <person name="White O."/>
            <person name="Sutton G.G."/>
            <person name="Dodson R.J."/>
            <person name="Gwinn M.L."/>
            <person name="Hickey E.K."/>
            <person name="Clayton R.A."/>
            <person name="Ketchum K.A."/>
            <person name="Sodergren E."/>
            <person name="Hardham J.M."/>
            <person name="McLeod M.P."/>
            <person name="Salzberg S.L."/>
            <person name="Peterson J.D."/>
            <person name="Khalak H.G."/>
            <person name="Richardson D.L."/>
            <person name="Howell J.K."/>
            <person name="Chidambaram M."/>
            <person name="Utterback T.R."/>
            <person name="McDonald L.A."/>
            <person name="Artiach P."/>
            <person name="Bowman C."/>
            <person name="Cotton M.D."/>
            <person name="Fujii C."/>
            <person name="Garland S.A."/>
            <person name="Hatch B."/>
            <person name="Horst K."/>
            <person name="Roberts K.M."/>
            <person name="Sandusky M."/>
            <person name="Weidman J.F."/>
            <person name="Smith H.O."/>
            <person name="Venter J.C."/>
        </authorList>
    </citation>
    <scope>NUCLEOTIDE SEQUENCE [LARGE SCALE GENOMIC DNA]</scope>
    <source>
        <strain>Nichols</strain>
    </source>
</reference>
<sequence>MRSCPKRARGVHWATGAALWCPSRMIFEKISPLQAFVWAVLRLFLKSFRTVFRGAVRAGCGVLACVRAYGFPPYGSKE</sequence>
<proteinExistence type="predicted"/>
<dbReference type="EMBL" id="AE000520">
    <property type="protein sequence ID" value="AAC65845.1"/>
    <property type="molecule type" value="Genomic_DNA"/>
</dbReference>
<dbReference type="PIR" id="C71270">
    <property type="entry name" value="C71270"/>
</dbReference>
<dbReference type="RefSeq" id="WP_010882312.1">
    <property type="nucleotide sequence ID" value="NC_021490.2"/>
</dbReference>
<dbReference type="IntAct" id="O83839">
    <property type="interactions" value="5"/>
</dbReference>
<dbReference type="STRING" id="243276.TP_0869"/>
<dbReference type="EnsemblBacteria" id="AAC65845">
    <property type="protein sequence ID" value="AAC65845"/>
    <property type="gene ID" value="TP_0869"/>
</dbReference>
<dbReference type="KEGG" id="tpa:TP_0869"/>
<dbReference type="KEGG" id="tpw:TPANIC_0869"/>
<dbReference type="HOGENOM" id="CLU_197660_0_0_12"/>
<dbReference type="Proteomes" id="UP000000811">
    <property type="component" value="Chromosome"/>
</dbReference>